<comment type="function">
    <text evidence="1">Catalyzes a proton abstraction reaction that results in 2,5-elimination of pyruvate from 2-succinyl-5-enolpyruvyl-6-hydroxy-3-cyclohexene-1-carboxylate (SEPHCHC) and the formation of 2-succinyl-6-hydroxy-2,4-cyclohexadiene-1-carboxylate (SHCHC).</text>
</comment>
<comment type="catalytic activity">
    <reaction evidence="1">
        <text>5-enolpyruvoyl-6-hydroxy-2-succinyl-cyclohex-3-ene-1-carboxylate = (1R,6R)-6-hydroxy-2-succinyl-cyclohexa-2,4-diene-1-carboxylate + pyruvate</text>
        <dbReference type="Rhea" id="RHEA:25597"/>
        <dbReference type="ChEBI" id="CHEBI:15361"/>
        <dbReference type="ChEBI" id="CHEBI:58689"/>
        <dbReference type="ChEBI" id="CHEBI:58818"/>
        <dbReference type="EC" id="4.2.99.20"/>
    </reaction>
</comment>
<comment type="pathway">
    <text evidence="1">Quinol/quinone metabolism; 1,4-dihydroxy-2-naphthoate biosynthesis; 1,4-dihydroxy-2-naphthoate from chorismate: step 3/7.</text>
</comment>
<comment type="pathway">
    <text evidence="1">Quinol/quinone metabolism; menaquinone biosynthesis.</text>
</comment>
<comment type="subunit">
    <text evidence="1">Monomer.</text>
</comment>
<comment type="similarity">
    <text evidence="1">Belongs to the AB hydrolase superfamily. MenH family.</text>
</comment>
<keyword id="KW-0456">Lyase</keyword>
<keyword id="KW-0474">Menaquinone biosynthesis</keyword>
<accession>B7M5U6</accession>
<name>MENH_ECO8A</name>
<protein>
    <recommendedName>
        <fullName evidence="1">2-succinyl-6-hydroxy-2,4-cyclohexadiene-1-carboxylate synthase</fullName>
        <shortName evidence="1">SHCHC synthase</shortName>
        <ecNumber evidence="1">4.2.99.20</ecNumber>
    </recommendedName>
</protein>
<sequence length="252" mass="27658">MILHAQAKHGKPGLPWLVFLHGFSGDCHEWQEVGEAFADYSRLYVDLPGHGGSAAISVDGFDDVTDLLRKTLVSYNILEFWLVGYSLGGRVAMMAACQGLAGLCGVIVEGGHPGLQNAEQRAERQRSDRQWAQRFCTEPLTAVFADWYQQPVFASLNDDQRRELVALRSNNNGATLAAMLEATSLAVQPDLRANLSARTFAFYYLCGERDSKFRALAAELAADCHVIPRAGHNAHRENPAGVIASLAQILRF</sequence>
<dbReference type="EC" id="4.2.99.20" evidence="1"/>
<dbReference type="EMBL" id="CU928160">
    <property type="protein sequence ID" value="CAQ99183.1"/>
    <property type="molecule type" value="Genomic_DNA"/>
</dbReference>
<dbReference type="RefSeq" id="WP_000600507.1">
    <property type="nucleotide sequence ID" value="NC_011741.1"/>
</dbReference>
<dbReference type="SMR" id="B7M5U6"/>
<dbReference type="ESTHER" id="ecoli-YFBB">
    <property type="family name" value="MenH_SHCHC"/>
</dbReference>
<dbReference type="MEROPS" id="S33.996"/>
<dbReference type="KEGG" id="ecr:ECIAI1_2341"/>
<dbReference type="HOGENOM" id="CLU_020336_38_2_6"/>
<dbReference type="UniPathway" id="UPA00079"/>
<dbReference type="UniPathway" id="UPA01057">
    <property type="reaction ID" value="UER00900"/>
</dbReference>
<dbReference type="GO" id="GO:0070205">
    <property type="term" value="F:2-succinyl-6-hydroxy-2,4-cyclohexadiene-1-carboxylate synthase activity"/>
    <property type="evidence" value="ECO:0007669"/>
    <property type="project" value="UniProtKB-UniRule"/>
</dbReference>
<dbReference type="GO" id="GO:0009234">
    <property type="term" value="P:menaquinone biosynthetic process"/>
    <property type="evidence" value="ECO:0007669"/>
    <property type="project" value="UniProtKB-UniRule"/>
</dbReference>
<dbReference type="FunFam" id="3.40.50.1820:FF:000038">
    <property type="entry name" value="2-succinyl-6-hydroxy-2,4-cyclohexadiene-1-carboxylate synthase"/>
    <property type="match status" value="1"/>
</dbReference>
<dbReference type="Gene3D" id="3.40.50.1820">
    <property type="entry name" value="alpha/beta hydrolase"/>
    <property type="match status" value="1"/>
</dbReference>
<dbReference type="HAMAP" id="MF_01660">
    <property type="entry name" value="MenH"/>
    <property type="match status" value="1"/>
</dbReference>
<dbReference type="InterPro" id="IPR000073">
    <property type="entry name" value="AB_hydrolase_1"/>
</dbReference>
<dbReference type="InterPro" id="IPR029058">
    <property type="entry name" value="AB_hydrolase_fold"/>
</dbReference>
<dbReference type="InterPro" id="IPR022485">
    <property type="entry name" value="SHCHC_synthase_MenH"/>
</dbReference>
<dbReference type="NCBIfam" id="TIGR03695">
    <property type="entry name" value="menH_SHCHC"/>
    <property type="match status" value="1"/>
</dbReference>
<dbReference type="NCBIfam" id="NF008340">
    <property type="entry name" value="PRK11126.1"/>
    <property type="match status" value="1"/>
</dbReference>
<dbReference type="PANTHER" id="PTHR42916">
    <property type="entry name" value="2-SUCCINYL-5-ENOLPYRUVYL-6-HYDROXY-3-CYCLOHEXENE-1-CARBOXYLATE SYNTHASE"/>
    <property type="match status" value="1"/>
</dbReference>
<dbReference type="PANTHER" id="PTHR42916:SF1">
    <property type="entry name" value="PROTEIN PHYLLO, CHLOROPLASTIC"/>
    <property type="match status" value="1"/>
</dbReference>
<dbReference type="Pfam" id="PF12697">
    <property type="entry name" value="Abhydrolase_6"/>
    <property type="match status" value="1"/>
</dbReference>
<dbReference type="SUPFAM" id="SSF53474">
    <property type="entry name" value="alpha/beta-Hydrolases"/>
    <property type="match status" value="1"/>
</dbReference>
<feature type="chain" id="PRO_1000187109" description="2-succinyl-6-hydroxy-2,4-cyclohexadiene-1-carboxylate synthase">
    <location>
        <begin position="1"/>
        <end position="252"/>
    </location>
</feature>
<evidence type="ECO:0000255" key="1">
    <source>
        <dbReference type="HAMAP-Rule" id="MF_01660"/>
    </source>
</evidence>
<gene>
    <name evidence="1" type="primary">menH</name>
    <name type="ordered locus">ECIAI1_2341</name>
</gene>
<organism>
    <name type="scientific">Escherichia coli O8 (strain IAI1)</name>
    <dbReference type="NCBI Taxonomy" id="585034"/>
    <lineage>
        <taxon>Bacteria</taxon>
        <taxon>Pseudomonadati</taxon>
        <taxon>Pseudomonadota</taxon>
        <taxon>Gammaproteobacteria</taxon>
        <taxon>Enterobacterales</taxon>
        <taxon>Enterobacteriaceae</taxon>
        <taxon>Escherichia</taxon>
    </lineage>
</organism>
<proteinExistence type="inferred from homology"/>
<reference key="1">
    <citation type="journal article" date="2009" name="PLoS Genet.">
        <title>Organised genome dynamics in the Escherichia coli species results in highly diverse adaptive paths.</title>
        <authorList>
            <person name="Touchon M."/>
            <person name="Hoede C."/>
            <person name="Tenaillon O."/>
            <person name="Barbe V."/>
            <person name="Baeriswyl S."/>
            <person name="Bidet P."/>
            <person name="Bingen E."/>
            <person name="Bonacorsi S."/>
            <person name="Bouchier C."/>
            <person name="Bouvet O."/>
            <person name="Calteau A."/>
            <person name="Chiapello H."/>
            <person name="Clermont O."/>
            <person name="Cruveiller S."/>
            <person name="Danchin A."/>
            <person name="Diard M."/>
            <person name="Dossat C."/>
            <person name="Karoui M.E."/>
            <person name="Frapy E."/>
            <person name="Garry L."/>
            <person name="Ghigo J.M."/>
            <person name="Gilles A.M."/>
            <person name="Johnson J."/>
            <person name="Le Bouguenec C."/>
            <person name="Lescat M."/>
            <person name="Mangenot S."/>
            <person name="Martinez-Jehanne V."/>
            <person name="Matic I."/>
            <person name="Nassif X."/>
            <person name="Oztas S."/>
            <person name="Petit M.A."/>
            <person name="Pichon C."/>
            <person name="Rouy Z."/>
            <person name="Ruf C.S."/>
            <person name="Schneider D."/>
            <person name="Tourret J."/>
            <person name="Vacherie B."/>
            <person name="Vallenet D."/>
            <person name="Medigue C."/>
            <person name="Rocha E.P.C."/>
            <person name="Denamur E."/>
        </authorList>
    </citation>
    <scope>NUCLEOTIDE SEQUENCE [LARGE SCALE GENOMIC DNA]</scope>
    <source>
        <strain>IAI1</strain>
    </source>
</reference>